<gene>
    <name evidence="7" type="primary">aoiG</name>
    <name type="ORF">AO090010000048</name>
</gene>
<dbReference type="EC" id="2.3.1.-" evidence="6"/>
<dbReference type="EMBL" id="AP007175">
    <property type="protein sequence ID" value="BAE65965.1"/>
    <property type="molecule type" value="Genomic_DNA"/>
</dbReference>
<dbReference type="STRING" id="510516.Q2TXQ8"/>
<dbReference type="ESTHER" id="aspor-q2txq8">
    <property type="family name" value="Thioesterase"/>
</dbReference>
<dbReference type="EnsemblFungi" id="BAE65965">
    <property type="protein sequence ID" value="BAE65965"/>
    <property type="gene ID" value="AO090010000048"/>
</dbReference>
<dbReference type="VEuPathDB" id="FungiDB:AO090010000048"/>
<dbReference type="HOGENOM" id="CLU_000022_6_0_1"/>
<dbReference type="OMA" id="EILTCQI"/>
<dbReference type="OrthoDB" id="5396558at2759"/>
<dbReference type="Proteomes" id="UP000006564">
    <property type="component" value="Chromosome 8"/>
</dbReference>
<dbReference type="GO" id="GO:0004315">
    <property type="term" value="F:3-oxoacyl-[acyl-carrier-protein] synthase activity"/>
    <property type="evidence" value="ECO:0007669"/>
    <property type="project" value="InterPro"/>
</dbReference>
<dbReference type="GO" id="GO:0004312">
    <property type="term" value="F:fatty acid synthase activity"/>
    <property type="evidence" value="ECO:0007669"/>
    <property type="project" value="TreeGrafter"/>
</dbReference>
<dbReference type="GO" id="GO:0031177">
    <property type="term" value="F:phosphopantetheine binding"/>
    <property type="evidence" value="ECO:0007669"/>
    <property type="project" value="InterPro"/>
</dbReference>
<dbReference type="GO" id="GO:0006633">
    <property type="term" value="P:fatty acid biosynthetic process"/>
    <property type="evidence" value="ECO:0007669"/>
    <property type="project" value="InterPro"/>
</dbReference>
<dbReference type="GO" id="GO:0046189">
    <property type="term" value="P:phenol-containing compound biosynthetic process"/>
    <property type="evidence" value="ECO:0007669"/>
    <property type="project" value="UniProtKB-ARBA"/>
</dbReference>
<dbReference type="GO" id="GO:0030639">
    <property type="term" value="P:polyketide biosynthetic process"/>
    <property type="evidence" value="ECO:0000270"/>
    <property type="project" value="AspGD"/>
</dbReference>
<dbReference type="GO" id="GO:0009403">
    <property type="term" value="P:toxin biosynthetic process"/>
    <property type="evidence" value="ECO:0007669"/>
    <property type="project" value="UniProtKB-ARBA"/>
</dbReference>
<dbReference type="CDD" id="cd00833">
    <property type="entry name" value="PKS"/>
    <property type="match status" value="1"/>
</dbReference>
<dbReference type="FunFam" id="3.40.366.10:FF:000002">
    <property type="entry name" value="Probable polyketide synthase 2"/>
    <property type="match status" value="1"/>
</dbReference>
<dbReference type="FunFam" id="1.10.1200.10:FF:000011">
    <property type="entry name" value="Sterigmatocystin biosynthesis polyketide synthase"/>
    <property type="match status" value="2"/>
</dbReference>
<dbReference type="FunFam" id="3.10.129.110:FF:000001">
    <property type="entry name" value="Sterigmatocystin biosynthesis polyketide synthase"/>
    <property type="match status" value="1"/>
</dbReference>
<dbReference type="FunFam" id="3.40.47.10:FF:000031">
    <property type="entry name" value="Sterigmatocystin biosynthesis polyketide synthase"/>
    <property type="match status" value="1"/>
</dbReference>
<dbReference type="FunFam" id="3.40.50.1820:FF:000116">
    <property type="entry name" value="Sterigmatocystin biosynthesis polyketide synthase"/>
    <property type="match status" value="1"/>
</dbReference>
<dbReference type="Gene3D" id="3.30.70.3290">
    <property type="match status" value="1"/>
</dbReference>
<dbReference type="Gene3D" id="3.40.47.10">
    <property type="match status" value="1"/>
</dbReference>
<dbReference type="Gene3D" id="1.10.1200.10">
    <property type="entry name" value="ACP-like"/>
    <property type="match status" value="2"/>
</dbReference>
<dbReference type="Gene3D" id="3.40.50.1820">
    <property type="entry name" value="alpha/beta hydrolase"/>
    <property type="match status" value="1"/>
</dbReference>
<dbReference type="Gene3D" id="3.40.366.10">
    <property type="entry name" value="Malonyl-Coenzyme A Acyl Carrier Protein, domain 2"/>
    <property type="match status" value="2"/>
</dbReference>
<dbReference type="Gene3D" id="3.10.129.110">
    <property type="entry name" value="Polyketide synthase dehydratase"/>
    <property type="match status" value="1"/>
</dbReference>
<dbReference type="InterPro" id="IPR029058">
    <property type="entry name" value="AB_hydrolase_fold"/>
</dbReference>
<dbReference type="InterPro" id="IPR001227">
    <property type="entry name" value="Ac_transferase_dom_sf"/>
</dbReference>
<dbReference type="InterPro" id="IPR036736">
    <property type="entry name" value="ACP-like_sf"/>
</dbReference>
<dbReference type="InterPro" id="IPR014043">
    <property type="entry name" value="Acyl_transferase_dom"/>
</dbReference>
<dbReference type="InterPro" id="IPR016035">
    <property type="entry name" value="Acyl_Trfase/lysoPLipase"/>
</dbReference>
<dbReference type="InterPro" id="IPR018201">
    <property type="entry name" value="Ketoacyl_synth_AS"/>
</dbReference>
<dbReference type="InterPro" id="IPR014031">
    <property type="entry name" value="Ketoacyl_synth_C"/>
</dbReference>
<dbReference type="InterPro" id="IPR014030">
    <property type="entry name" value="Ketoacyl_synth_N"/>
</dbReference>
<dbReference type="InterPro" id="IPR016036">
    <property type="entry name" value="Malonyl_transacylase_ACP-bd"/>
</dbReference>
<dbReference type="InterPro" id="IPR020841">
    <property type="entry name" value="PKS_Beta-ketoAc_synthase_dom"/>
</dbReference>
<dbReference type="InterPro" id="IPR042104">
    <property type="entry name" value="PKS_dehydratase_sf"/>
</dbReference>
<dbReference type="InterPro" id="IPR049551">
    <property type="entry name" value="PKS_DH_C"/>
</dbReference>
<dbReference type="InterPro" id="IPR049900">
    <property type="entry name" value="PKS_mFAS_DH"/>
</dbReference>
<dbReference type="InterPro" id="IPR050091">
    <property type="entry name" value="PKS_NRPS_Biosynth_Enz"/>
</dbReference>
<dbReference type="InterPro" id="IPR020806">
    <property type="entry name" value="PKS_PP-bd"/>
</dbReference>
<dbReference type="InterPro" id="IPR009081">
    <property type="entry name" value="PP-bd_ACP"/>
</dbReference>
<dbReference type="InterPro" id="IPR006162">
    <property type="entry name" value="Ppantetheine_attach_site"/>
</dbReference>
<dbReference type="InterPro" id="IPR030918">
    <property type="entry name" value="PT_fungal_PKS"/>
</dbReference>
<dbReference type="InterPro" id="IPR032088">
    <property type="entry name" value="SAT"/>
</dbReference>
<dbReference type="InterPro" id="IPR001031">
    <property type="entry name" value="Thioesterase"/>
</dbReference>
<dbReference type="InterPro" id="IPR016039">
    <property type="entry name" value="Thiolase-like"/>
</dbReference>
<dbReference type="NCBIfam" id="TIGR04532">
    <property type="entry name" value="PT_fungal_PKS"/>
    <property type="match status" value="1"/>
</dbReference>
<dbReference type="PANTHER" id="PTHR43775:SF45">
    <property type="entry name" value="CONIDIAL PIGMENT POLYKETIDE SYNTHASE ALB1"/>
    <property type="match status" value="1"/>
</dbReference>
<dbReference type="PANTHER" id="PTHR43775">
    <property type="entry name" value="FATTY ACID SYNTHASE"/>
    <property type="match status" value="1"/>
</dbReference>
<dbReference type="Pfam" id="PF00698">
    <property type="entry name" value="Acyl_transf_1"/>
    <property type="match status" value="1"/>
</dbReference>
<dbReference type="Pfam" id="PF22621">
    <property type="entry name" value="CurL-like_PKS_C"/>
    <property type="match status" value="1"/>
</dbReference>
<dbReference type="Pfam" id="PF00109">
    <property type="entry name" value="ketoacyl-synt"/>
    <property type="match status" value="1"/>
</dbReference>
<dbReference type="Pfam" id="PF02801">
    <property type="entry name" value="Ketoacyl-synt_C"/>
    <property type="match status" value="1"/>
</dbReference>
<dbReference type="Pfam" id="PF00550">
    <property type="entry name" value="PP-binding"/>
    <property type="match status" value="2"/>
</dbReference>
<dbReference type="Pfam" id="PF14765">
    <property type="entry name" value="PS-DH"/>
    <property type="match status" value="1"/>
</dbReference>
<dbReference type="Pfam" id="PF16073">
    <property type="entry name" value="SAT"/>
    <property type="match status" value="1"/>
</dbReference>
<dbReference type="Pfam" id="PF00975">
    <property type="entry name" value="Thioesterase"/>
    <property type="match status" value="1"/>
</dbReference>
<dbReference type="SMART" id="SM00827">
    <property type="entry name" value="PKS_AT"/>
    <property type="match status" value="1"/>
</dbReference>
<dbReference type="SMART" id="SM00825">
    <property type="entry name" value="PKS_KS"/>
    <property type="match status" value="1"/>
</dbReference>
<dbReference type="SMART" id="SM00823">
    <property type="entry name" value="PKS_PP"/>
    <property type="match status" value="2"/>
</dbReference>
<dbReference type="SUPFAM" id="SSF47336">
    <property type="entry name" value="ACP-like"/>
    <property type="match status" value="2"/>
</dbReference>
<dbReference type="SUPFAM" id="SSF53474">
    <property type="entry name" value="alpha/beta-Hydrolases"/>
    <property type="match status" value="1"/>
</dbReference>
<dbReference type="SUPFAM" id="SSF52151">
    <property type="entry name" value="FabD/lysophospholipase-like"/>
    <property type="match status" value="1"/>
</dbReference>
<dbReference type="SUPFAM" id="SSF55048">
    <property type="entry name" value="Probable ACP-binding domain of malonyl-CoA ACP transacylase"/>
    <property type="match status" value="1"/>
</dbReference>
<dbReference type="SUPFAM" id="SSF53901">
    <property type="entry name" value="Thiolase-like"/>
    <property type="match status" value="1"/>
</dbReference>
<dbReference type="PROSITE" id="PS50075">
    <property type="entry name" value="CARRIER"/>
    <property type="match status" value="2"/>
</dbReference>
<dbReference type="PROSITE" id="PS00606">
    <property type="entry name" value="KS3_1"/>
    <property type="match status" value="1"/>
</dbReference>
<dbReference type="PROSITE" id="PS52004">
    <property type="entry name" value="KS3_2"/>
    <property type="match status" value="1"/>
</dbReference>
<dbReference type="PROSITE" id="PS00012">
    <property type="entry name" value="PHOSPHOPANTETHEINE"/>
    <property type="match status" value="2"/>
</dbReference>
<dbReference type="PROSITE" id="PS52019">
    <property type="entry name" value="PKS_MFAS_DH"/>
    <property type="match status" value="1"/>
</dbReference>
<comment type="function">
    <text evidence="6">Non-reducing polyketide synthase; part of the gene cluster that mediates the biosynthesis of a methylated derivative of known natural products orthosporin and diaporthin (PubMed:22447538). AoiG catalyzes the biosynthesis of the hexaketide isocoumarin scaffold, via condensation of one acetyl-CoA starter unit with 6 malonyl-CoA units (PubMed:22447538). An oxidoreductase that has still to be identified catalyzes the stereospecific reduction of the carbonyl moiety of the hexaketide isocoumarin scaffold to generate the S-configured secondary alcohol at C-11 of orthosporin. The methyltrasferase aoiF then catalyzes the biotransformation of not only orthosporin to diaporthin but also diaporthin to the final product, by performing a tandem methylation of the polyketide core (PubMed:22447538).</text>
</comment>
<comment type="cofactor">
    <cofactor evidence="2">
        <name>pantetheine 4'-phosphate</name>
        <dbReference type="ChEBI" id="CHEBI:47942"/>
    </cofactor>
</comment>
<comment type="induction">
    <text evidence="6">Expression is positively regulated by the cluster-specific transcription factor aoiH.</text>
</comment>
<comment type="domain">
    <text evidence="8">Multidomain protein; including a starter unit:ACP transacylase (SAT) that selects the starter unit; a ketosynthase (KS) that catalyzes repeated decarboxylative condensation to elongate the polyketide backbone; a malonyl-CoA:ACP transacylase (MAT) that selects and transfers the extender unit malonyl-CoA; a product template (PT) domain that controls the immediate cyclization regioselectivity of the reactive polyketide backbone; 2 acyl-carrier protein (ACP) domains that serve as the tethers of the growing and completed polyketide via their phosphopantetheinyl arm, and a C-terminal thioesterase/Claisen cyclase (TE/CLC) that releases the polyketide chain from the non-reducing polyketide synthase.</text>
</comment>
<keyword id="KW-0596">Phosphopantetheine</keyword>
<keyword id="KW-0597">Phosphoprotein</keyword>
<keyword id="KW-1185">Reference proteome</keyword>
<keyword id="KW-0677">Repeat</keyword>
<keyword id="KW-0808">Transferase</keyword>
<proteinExistence type="evidence at protein level"/>
<reference key="1">
    <citation type="journal article" date="2005" name="Nature">
        <title>Genome sequencing and analysis of Aspergillus oryzae.</title>
        <authorList>
            <person name="Machida M."/>
            <person name="Asai K."/>
            <person name="Sano M."/>
            <person name="Tanaka T."/>
            <person name="Kumagai T."/>
            <person name="Terai G."/>
            <person name="Kusumoto K."/>
            <person name="Arima T."/>
            <person name="Akita O."/>
            <person name="Kashiwagi Y."/>
            <person name="Abe K."/>
            <person name="Gomi K."/>
            <person name="Horiuchi H."/>
            <person name="Kitamoto K."/>
            <person name="Kobayashi T."/>
            <person name="Takeuchi M."/>
            <person name="Denning D.W."/>
            <person name="Galagan J.E."/>
            <person name="Nierman W.C."/>
            <person name="Yu J."/>
            <person name="Archer D.B."/>
            <person name="Bennett J.W."/>
            <person name="Bhatnagar D."/>
            <person name="Cleveland T.E."/>
            <person name="Fedorova N.D."/>
            <person name="Gotoh O."/>
            <person name="Horikawa H."/>
            <person name="Hosoyama A."/>
            <person name="Ichinomiya M."/>
            <person name="Igarashi R."/>
            <person name="Iwashita K."/>
            <person name="Juvvadi P.R."/>
            <person name="Kato M."/>
            <person name="Kato Y."/>
            <person name="Kin T."/>
            <person name="Kokubun A."/>
            <person name="Maeda H."/>
            <person name="Maeyama N."/>
            <person name="Maruyama J."/>
            <person name="Nagasaki H."/>
            <person name="Nakajima T."/>
            <person name="Oda K."/>
            <person name="Okada K."/>
            <person name="Paulsen I."/>
            <person name="Sakamoto K."/>
            <person name="Sawano T."/>
            <person name="Takahashi M."/>
            <person name="Takase K."/>
            <person name="Terabayashi Y."/>
            <person name="Wortman J.R."/>
            <person name="Yamada O."/>
            <person name="Yamagata Y."/>
            <person name="Anazawa H."/>
            <person name="Hata Y."/>
            <person name="Koide Y."/>
            <person name="Komori T."/>
            <person name="Koyama Y."/>
            <person name="Minetoki T."/>
            <person name="Suharnan S."/>
            <person name="Tanaka A."/>
            <person name="Isono K."/>
            <person name="Kuhara S."/>
            <person name="Ogasawara N."/>
            <person name="Kikuchi H."/>
        </authorList>
    </citation>
    <scope>NUCLEOTIDE SEQUENCE [LARGE SCALE GENOMIC DNA]</scope>
    <source>
        <strain>ATCC 42149 / RIB 40</strain>
    </source>
</reference>
<reference key="2">
    <citation type="journal article" date="2012" name="ChemBioChem">
        <title>Overexpressing transcriptional regulator in Aspergillus oryzae activates a silent biosynthetic pathway to produce a novel polyketide.</title>
        <authorList>
            <person name="Nakazawa T."/>
            <person name="Ishiuchi K."/>
            <person name="Praseuth A."/>
            <person name="Noguchi H."/>
            <person name="Hotta K."/>
            <person name="Watanabe K."/>
        </authorList>
    </citation>
    <scope>FUNCTION</scope>
    <scope>CATALYTIC ACTIVITY</scope>
    <scope>PATHWAY</scope>
    <scope>DOMAIN</scope>
    <scope>INDUCTION</scope>
</reference>
<protein>
    <recommendedName>
        <fullName evidence="7">Non-reducing polyketide synthase aoiG</fullName>
        <ecNumber evidence="6">2.3.1.-</ecNumber>
    </recommendedName>
</protein>
<name>AOIG_ASPOR</name>
<feature type="chain" id="PRO_0000462120" description="Non-reducing polyketide synthase aoiG">
    <location>
        <begin position="1"/>
        <end position="2121"/>
    </location>
</feature>
<feature type="domain" description="Starter acyltransferase (SAT)" evidence="1 8">
    <location>
        <begin position="5"/>
        <end position="258"/>
    </location>
</feature>
<feature type="domain" description="Ketosynthase family 3 (KS3)" evidence="3 8">
    <location>
        <begin position="386"/>
        <end position="817"/>
    </location>
</feature>
<feature type="domain" description="Malonyl-CoA:ACP transacylase (MAT)" evidence="1 8">
    <location>
        <begin position="921"/>
        <end position="1239"/>
    </location>
</feature>
<feature type="domain" description="PKS/mFAS DH" evidence="4 8">
    <location>
        <begin position="1302"/>
        <end position="1608"/>
    </location>
</feature>
<feature type="domain" description="Carrier 1" evidence="2 8">
    <location>
        <begin position="1646"/>
        <end position="1723"/>
    </location>
</feature>
<feature type="domain" description="Carrier 2" evidence="2 8">
    <location>
        <begin position="1763"/>
        <end position="1840"/>
    </location>
</feature>
<feature type="region of interest" description="N-terminal hotdog fold" evidence="4">
    <location>
        <begin position="1302"/>
        <end position="1433"/>
    </location>
</feature>
<feature type="region of interest" description="C-terminal hotdog fold" evidence="4">
    <location>
        <begin position="1461"/>
        <end position="1608"/>
    </location>
</feature>
<feature type="region of interest" description="Disordered" evidence="5">
    <location>
        <begin position="1728"/>
        <end position="1760"/>
    </location>
</feature>
<feature type="region of interest" description="TE/CLC (thioesterase/Claisen cyclase) domain" evidence="1 8">
    <location>
        <begin position="1872"/>
        <end position="1976"/>
    </location>
</feature>
<feature type="compositionally biased region" description="Low complexity" evidence="5">
    <location>
        <begin position="1728"/>
        <end position="1752"/>
    </location>
</feature>
<feature type="active site" description="For beta-ketoacyl synthase activity" evidence="3">
    <location>
        <position position="558"/>
    </location>
</feature>
<feature type="active site" description="For beta-ketoacyl synthase activity" evidence="3">
    <location>
        <position position="693"/>
    </location>
</feature>
<feature type="active site" description="For beta-ketoacyl synthase activity" evidence="3">
    <location>
        <position position="735"/>
    </location>
</feature>
<feature type="active site" description="Proton acceptor; for dehydratase activity" evidence="4">
    <location>
        <position position="1334"/>
    </location>
</feature>
<feature type="active site" description="Proton donor; for dehydratase activity" evidence="4">
    <location>
        <position position="1519"/>
    </location>
</feature>
<feature type="modified residue" description="O-(pantetheine 4'-phosphoryl)serine" evidence="2">
    <location>
        <position position="1683"/>
    </location>
</feature>
<feature type="modified residue" description="O-(pantetheine 4'-phosphoryl)serine" evidence="2">
    <location>
        <position position="1800"/>
    </location>
</feature>
<evidence type="ECO:0000255" key="1"/>
<evidence type="ECO:0000255" key="2">
    <source>
        <dbReference type="PROSITE-ProRule" id="PRU00258"/>
    </source>
</evidence>
<evidence type="ECO:0000255" key="3">
    <source>
        <dbReference type="PROSITE-ProRule" id="PRU01348"/>
    </source>
</evidence>
<evidence type="ECO:0000255" key="4">
    <source>
        <dbReference type="PROSITE-ProRule" id="PRU01363"/>
    </source>
</evidence>
<evidence type="ECO:0000256" key="5">
    <source>
        <dbReference type="SAM" id="MobiDB-lite"/>
    </source>
</evidence>
<evidence type="ECO:0000269" key="6">
    <source>
    </source>
</evidence>
<evidence type="ECO:0000303" key="7">
    <source>
    </source>
</evidence>
<evidence type="ECO:0000305" key="8">
    <source>
    </source>
</evidence>
<sequence length="2121" mass="233110">MVNIYIFGDQTVRVDDAVHKLLHVKNNPILKSFLDGSFAAIRKQIFLLPANERTSLPDAHTLPLLLEAVRRGRRHVALESALVCLCEIGQYIALLQTTDLCHPPTGSILVGFCTGSLAAAAVSCVRTSIDLLTLGIEAVVVAFRVGMHVARRANALGGDGGSQWKPWSLAVTDGSESETEKILEEFTRDEVSGVHVANRHDAYILAKGLPAIMKPYVSAAGSNTLTISGTPRVLEALKASPHLRGTKSLPVSIYAPYHAAHLYNEADVESIFACKPVESALFHRELRTPLISCATGTVLKEKTFGDLLRALVMEILTCQIRFDKVEESIVQHTPGATAQLIPIHTNIAPRMKTSLTQVGLQVECFKAIANQEPAAEALSESPSNDSSKIAIIGFSGRFPEADGLNEFWELLQQGLDVHKPIPADRFDLEAHYDATLREKNTSRIKHGCWIRSPGSFDARFFQMSPREACQTDPAQRLALLTAYEAMEMAGFVPDRTPSSQRDRVGVYYGMTSDDWREVNSSQDIDTYFIPGGIRAFVPGRINYFFKFSGPSITVDTACSSSLAAIHTACNALLNSDCDTALAGGTNILTNPDNFAGLDRGHFLSSTGNCKTFDDDADGYCRADGVGTVILKRLQDAIADNDPIFGVIVGARTSHSAEAVSITRPLADAQAHLFRKLLAESGIHPHEISYIEMHGTGTQAGDAVEMKSVLDSFARDDSRAPDRPLHLGSVKANVGHGESASGVTALIKVLLMMQKNRIPPHCGIKGRINRHFPTDMEYRNVHIPFMETDWTRPQEGKRRSFINNFSAAGGNTAVLVEDAPLLEQSRAISSPDPQRYHVITLSARSVRSLSKNMRALGEFIGSETSPGLLARIAYTTTARRMHHSYRVAFVGNDLQEVKRRFLDTDVTEAIKPCPTKSPGVGFLFTGQGAQQTAMARELYDRFTSFRADILEFEAVGRGHGFPSILPLITGAVDVEELSPMIVQLGTVVIQIAMARLWQTWGLTPEYALGHSLGEYAALQIAGVLSISDTIYLAGSRAALLEKRCTAGSHGMLAVKASVAHLEEALKGMQVEVSCINGFDDTVLSGTNDEIDRASKELSELKVTFKRLILPFAFHSSQVDPILEELEHIASQLSFQPPRIPIVSPTVGHIITDEGTIGAQYIRRHCREPVNFLGAIQAAQGSGICNSGALAVEIGAHPILTRMMKAAVGSSVTVCSTLSHREDMFKTLTESLSVLHLAGVRLNWDEYHRDFNNQVVMLPAYSWDYQDYWIQYQNNFCLTKGSPERSESVDAIQPMSTRLSPSVQKILEEEMTAAQASIIIESDITDPELLPVALDHKVNGVTLCPSSLYADIGHTLGTYLLGKKEDVTDYKIDVSNMAVEKALVVKGTGPQLFRASLDMDWNMLRGMMKVYSVNNMGTLTTHHAQCTIELQRPHQWQEGWNRQLYLIQRSIEQLKKGVEEGWTHKMRRGVAYRLFSSMMQYGPSYQAMEEVIFDSSGLEATAQVRLQSTTGRYSFNPVWSDSLGHITGFVTNCNDSIDLTENLFVNHGWGFMRCVEPFSPDTVYQTHVKMQPVDGNNGFYVGDVYVLNDHRIIAQYGAVTFQKVARRVLEMLLPATTSKGRSSNIRPRNVGTAQSAKIVQSKRRTQTPHVEDAWQQVLEMIARELGVDPGQLTEDVNFTDMGVDSLMSLTIIGNFREFLSLDVPWSLFEDCPSVQSLRIYLNMSSLSESDSIETSSYPTPDESTTTTITSPSGSDRNVGRNSGIDGVGTTVGLVLSILAEEIGVNVRDLSNADGLSELGLDSLLSITALGRVRDETDLDLPSDFFLEHSSVAAITAALHAIFGSTEQGPEQSLITSHPPAMSINLQGDEGCPQTLFLFPDGSGSSTSYSALPTISKDVRVYAMDCPYLKRPNELAKCQLQDLTPVYVAEIRRRQLRGPYSLGGWSAGGIAAYEAAQYLVDQGERVERLILIDSPNPMGLGKCPPHFYRFLEEAGVFGVHGGRKPPAWLLQHFQAFNDVLSQYTLEPFRPADATPNTTLIYAQDGVCKSPRDPRPERHPGDPEVFSWLLENRVDMSCNGWDQLLGEDNIHLGTVFDANHFTIVRTPAVVRLSEIVRMAMSRKFQ</sequence>
<accession>Q2TXQ8</accession>
<organism>
    <name type="scientific">Aspergillus oryzae (strain ATCC 42149 / RIB 40)</name>
    <name type="common">Yellow koji mold</name>
    <dbReference type="NCBI Taxonomy" id="510516"/>
    <lineage>
        <taxon>Eukaryota</taxon>
        <taxon>Fungi</taxon>
        <taxon>Dikarya</taxon>
        <taxon>Ascomycota</taxon>
        <taxon>Pezizomycotina</taxon>
        <taxon>Eurotiomycetes</taxon>
        <taxon>Eurotiomycetidae</taxon>
        <taxon>Eurotiales</taxon>
        <taxon>Aspergillaceae</taxon>
        <taxon>Aspergillus</taxon>
        <taxon>Aspergillus subgen. Circumdati</taxon>
    </lineage>
</organism>